<accession>Q63GT1</accession>
<name>PUR5_BACCZ</name>
<comment type="catalytic activity">
    <reaction evidence="1">
        <text>2-formamido-N(1)-(5-O-phospho-beta-D-ribosyl)acetamidine + ATP = 5-amino-1-(5-phospho-beta-D-ribosyl)imidazole + ADP + phosphate + H(+)</text>
        <dbReference type="Rhea" id="RHEA:23032"/>
        <dbReference type="ChEBI" id="CHEBI:15378"/>
        <dbReference type="ChEBI" id="CHEBI:30616"/>
        <dbReference type="ChEBI" id="CHEBI:43474"/>
        <dbReference type="ChEBI" id="CHEBI:137981"/>
        <dbReference type="ChEBI" id="CHEBI:147287"/>
        <dbReference type="ChEBI" id="CHEBI:456216"/>
        <dbReference type="EC" id="6.3.3.1"/>
    </reaction>
</comment>
<comment type="pathway">
    <text evidence="1">Purine metabolism; IMP biosynthesis via de novo pathway; 5-amino-1-(5-phospho-D-ribosyl)imidazole from N(2)-formyl-N(1)-(5-phospho-D-ribosyl)glycinamide: step 2/2.</text>
</comment>
<comment type="subcellular location">
    <subcellularLocation>
        <location evidence="1">Cytoplasm</location>
    </subcellularLocation>
</comment>
<comment type="similarity">
    <text evidence="1">Belongs to the AIR synthase family.</text>
</comment>
<reference key="1">
    <citation type="journal article" date="2006" name="J. Bacteriol.">
        <title>Pathogenomic sequence analysis of Bacillus cereus and Bacillus thuringiensis isolates closely related to Bacillus anthracis.</title>
        <authorList>
            <person name="Han C.S."/>
            <person name="Xie G."/>
            <person name="Challacombe J.F."/>
            <person name="Altherr M.R."/>
            <person name="Bhotika S.S."/>
            <person name="Bruce D."/>
            <person name="Campbell C.S."/>
            <person name="Campbell M.L."/>
            <person name="Chen J."/>
            <person name="Chertkov O."/>
            <person name="Cleland C."/>
            <person name="Dimitrijevic M."/>
            <person name="Doggett N.A."/>
            <person name="Fawcett J.J."/>
            <person name="Glavina T."/>
            <person name="Goodwin L.A."/>
            <person name="Hill K.K."/>
            <person name="Hitchcock P."/>
            <person name="Jackson P.J."/>
            <person name="Keim P."/>
            <person name="Kewalramani A.R."/>
            <person name="Longmire J."/>
            <person name="Lucas S."/>
            <person name="Malfatti S."/>
            <person name="McMurry K."/>
            <person name="Meincke L.J."/>
            <person name="Misra M."/>
            <person name="Moseman B.L."/>
            <person name="Mundt M."/>
            <person name="Munk A.C."/>
            <person name="Okinaka R.T."/>
            <person name="Parson-Quintana B."/>
            <person name="Reilly L.P."/>
            <person name="Richardson P."/>
            <person name="Robinson D.L."/>
            <person name="Rubin E."/>
            <person name="Saunders E."/>
            <person name="Tapia R."/>
            <person name="Tesmer J.G."/>
            <person name="Thayer N."/>
            <person name="Thompson L.S."/>
            <person name="Tice H."/>
            <person name="Ticknor L.O."/>
            <person name="Wills P.L."/>
            <person name="Brettin T.S."/>
            <person name="Gilna P."/>
        </authorList>
    </citation>
    <scope>NUCLEOTIDE SEQUENCE [LARGE SCALE GENOMIC DNA]</scope>
    <source>
        <strain>ZK / E33L</strain>
    </source>
</reference>
<sequence length="346" mass="37185">MANAYKQAGVDIEAGYEAVSRMKKHVQTTMRKEVLGGLGGFGGMFDLSKFALEEPVLVSGTDGVGTKLMLAFMADKHDTIGIDAVAMCVNDIVVQGAEPLFFLDYIACGKAEPSKIENIVKGISEGCRQAGCALIGGETAEMPGMYSTEEYDLAGFTVGIVDKKKIVTGEKIEAGHVLIGLASSGIHSNGYSLVRKVLLEDGELSLDRIYGRLELPLGEELLKPTKIYVKPILELLKNHEVYGMAHITGGGFIENIPRMLPEGIGAEIELGSWEIQPIFSLLQEVGKLEEKEMFNIFNMGIGMVVAVKEEDAKDIVRLLGEQGETARIIGRTVQGAGVTFNGGKAL</sequence>
<dbReference type="EC" id="6.3.3.1" evidence="1"/>
<dbReference type="EMBL" id="CP000001">
    <property type="protein sequence ID" value="AAU19968.1"/>
    <property type="molecule type" value="Genomic_DNA"/>
</dbReference>
<dbReference type="RefSeq" id="WP_001262434.1">
    <property type="nucleotide sequence ID" value="NC_006274.1"/>
</dbReference>
<dbReference type="SMR" id="Q63GT1"/>
<dbReference type="KEGG" id="bcz:BCE33L0271"/>
<dbReference type="PATRIC" id="fig|288681.22.peg.5339"/>
<dbReference type="UniPathway" id="UPA00074">
    <property type="reaction ID" value="UER00129"/>
</dbReference>
<dbReference type="Proteomes" id="UP000002612">
    <property type="component" value="Chromosome"/>
</dbReference>
<dbReference type="GO" id="GO:0005829">
    <property type="term" value="C:cytosol"/>
    <property type="evidence" value="ECO:0007669"/>
    <property type="project" value="TreeGrafter"/>
</dbReference>
<dbReference type="GO" id="GO:0005524">
    <property type="term" value="F:ATP binding"/>
    <property type="evidence" value="ECO:0007669"/>
    <property type="project" value="UniProtKB-KW"/>
</dbReference>
<dbReference type="GO" id="GO:0004637">
    <property type="term" value="F:phosphoribosylamine-glycine ligase activity"/>
    <property type="evidence" value="ECO:0007669"/>
    <property type="project" value="TreeGrafter"/>
</dbReference>
<dbReference type="GO" id="GO:0004641">
    <property type="term" value="F:phosphoribosylformylglycinamidine cyclo-ligase activity"/>
    <property type="evidence" value="ECO:0007669"/>
    <property type="project" value="UniProtKB-UniRule"/>
</dbReference>
<dbReference type="GO" id="GO:0006189">
    <property type="term" value="P:'de novo' IMP biosynthetic process"/>
    <property type="evidence" value="ECO:0007669"/>
    <property type="project" value="UniProtKB-UniRule"/>
</dbReference>
<dbReference type="GO" id="GO:0046084">
    <property type="term" value="P:adenine biosynthetic process"/>
    <property type="evidence" value="ECO:0007669"/>
    <property type="project" value="TreeGrafter"/>
</dbReference>
<dbReference type="CDD" id="cd02196">
    <property type="entry name" value="PurM"/>
    <property type="match status" value="1"/>
</dbReference>
<dbReference type="FunFam" id="3.30.1330.10:FF:000001">
    <property type="entry name" value="Phosphoribosylformylglycinamidine cyclo-ligase"/>
    <property type="match status" value="1"/>
</dbReference>
<dbReference type="FunFam" id="3.90.650.10:FF:000001">
    <property type="entry name" value="Phosphoribosylformylglycinamidine cyclo-ligase"/>
    <property type="match status" value="1"/>
</dbReference>
<dbReference type="Gene3D" id="3.90.650.10">
    <property type="entry name" value="PurM-like C-terminal domain"/>
    <property type="match status" value="1"/>
</dbReference>
<dbReference type="Gene3D" id="3.30.1330.10">
    <property type="entry name" value="PurM-like, N-terminal domain"/>
    <property type="match status" value="1"/>
</dbReference>
<dbReference type="HAMAP" id="MF_00741">
    <property type="entry name" value="AIRS"/>
    <property type="match status" value="1"/>
</dbReference>
<dbReference type="InterPro" id="IPR010918">
    <property type="entry name" value="PurM-like_C_dom"/>
</dbReference>
<dbReference type="InterPro" id="IPR036676">
    <property type="entry name" value="PurM-like_C_sf"/>
</dbReference>
<dbReference type="InterPro" id="IPR016188">
    <property type="entry name" value="PurM-like_N"/>
</dbReference>
<dbReference type="InterPro" id="IPR036921">
    <property type="entry name" value="PurM-like_N_sf"/>
</dbReference>
<dbReference type="InterPro" id="IPR004733">
    <property type="entry name" value="PurM_cligase"/>
</dbReference>
<dbReference type="NCBIfam" id="TIGR00878">
    <property type="entry name" value="purM"/>
    <property type="match status" value="1"/>
</dbReference>
<dbReference type="PANTHER" id="PTHR10520:SF12">
    <property type="entry name" value="TRIFUNCTIONAL PURINE BIOSYNTHETIC PROTEIN ADENOSINE-3"/>
    <property type="match status" value="1"/>
</dbReference>
<dbReference type="PANTHER" id="PTHR10520">
    <property type="entry name" value="TRIFUNCTIONAL PURINE BIOSYNTHETIC PROTEIN ADENOSINE-3-RELATED"/>
    <property type="match status" value="1"/>
</dbReference>
<dbReference type="Pfam" id="PF00586">
    <property type="entry name" value="AIRS"/>
    <property type="match status" value="1"/>
</dbReference>
<dbReference type="Pfam" id="PF02769">
    <property type="entry name" value="AIRS_C"/>
    <property type="match status" value="1"/>
</dbReference>
<dbReference type="SUPFAM" id="SSF56042">
    <property type="entry name" value="PurM C-terminal domain-like"/>
    <property type="match status" value="1"/>
</dbReference>
<dbReference type="SUPFAM" id="SSF55326">
    <property type="entry name" value="PurM N-terminal domain-like"/>
    <property type="match status" value="1"/>
</dbReference>
<protein>
    <recommendedName>
        <fullName evidence="1">Phosphoribosylformylglycinamidine cyclo-ligase</fullName>
        <ecNumber evidence="1">6.3.3.1</ecNumber>
    </recommendedName>
    <alternativeName>
        <fullName evidence="1">AIR synthase</fullName>
    </alternativeName>
    <alternativeName>
        <fullName evidence="1">AIRS</fullName>
    </alternativeName>
    <alternativeName>
        <fullName evidence="1">Phosphoribosyl-aminoimidazole synthetase</fullName>
    </alternativeName>
</protein>
<keyword id="KW-0067">ATP-binding</keyword>
<keyword id="KW-0963">Cytoplasm</keyword>
<keyword id="KW-0436">Ligase</keyword>
<keyword id="KW-0547">Nucleotide-binding</keyword>
<keyword id="KW-0658">Purine biosynthesis</keyword>
<feature type="chain" id="PRO_0000258329" description="Phosphoribosylformylglycinamidine cyclo-ligase">
    <location>
        <begin position="1"/>
        <end position="346"/>
    </location>
</feature>
<evidence type="ECO:0000255" key="1">
    <source>
        <dbReference type="HAMAP-Rule" id="MF_00741"/>
    </source>
</evidence>
<gene>
    <name evidence="1" type="primary">purM</name>
    <name type="ordered locus">BCE33L0271</name>
</gene>
<organism>
    <name type="scientific">Bacillus cereus (strain ZK / E33L)</name>
    <dbReference type="NCBI Taxonomy" id="288681"/>
    <lineage>
        <taxon>Bacteria</taxon>
        <taxon>Bacillati</taxon>
        <taxon>Bacillota</taxon>
        <taxon>Bacilli</taxon>
        <taxon>Bacillales</taxon>
        <taxon>Bacillaceae</taxon>
        <taxon>Bacillus</taxon>
        <taxon>Bacillus cereus group</taxon>
    </lineage>
</organism>
<proteinExistence type="inferred from homology"/>